<name>YJO6_SCHPO</name>
<gene>
    <name type="ORF">SPCPB16A4.06c</name>
</gene>
<evidence type="ECO:0000256" key="1">
    <source>
        <dbReference type="SAM" id="MobiDB-lite"/>
    </source>
</evidence>
<accession>Q96WU9</accession>
<reference key="1">
    <citation type="journal article" date="2002" name="Nature">
        <title>The genome sequence of Schizosaccharomyces pombe.</title>
        <authorList>
            <person name="Wood V."/>
            <person name="Gwilliam R."/>
            <person name="Rajandream M.A."/>
            <person name="Lyne M.H."/>
            <person name="Lyne R."/>
            <person name="Stewart A."/>
            <person name="Sgouros J.G."/>
            <person name="Peat N."/>
            <person name="Hayles J."/>
            <person name="Baker S.G."/>
            <person name="Basham D."/>
            <person name="Bowman S."/>
            <person name="Brooks K."/>
            <person name="Brown D."/>
            <person name="Brown S."/>
            <person name="Chillingworth T."/>
            <person name="Churcher C.M."/>
            <person name="Collins M."/>
            <person name="Connor R."/>
            <person name="Cronin A."/>
            <person name="Davis P."/>
            <person name="Feltwell T."/>
            <person name="Fraser A."/>
            <person name="Gentles S."/>
            <person name="Goble A."/>
            <person name="Hamlin N."/>
            <person name="Harris D.E."/>
            <person name="Hidalgo J."/>
            <person name="Hodgson G."/>
            <person name="Holroyd S."/>
            <person name="Hornsby T."/>
            <person name="Howarth S."/>
            <person name="Huckle E.J."/>
            <person name="Hunt S."/>
            <person name="Jagels K."/>
            <person name="James K.D."/>
            <person name="Jones L."/>
            <person name="Jones M."/>
            <person name="Leather S."/>
            <person name="McDonald S."/>
            <person name="McLean J."/>
            <person name="Mooney P."/>
            <person name="Moule S."/>
            <person name="Mungall K.L."/>
            <person name="Murphy L.D."/>
            <person name="Niblett D."/>
            <person name="Odell C."/>
            <person name="Oliver K."/>
            <person name="O'Neil S."/>
            <person name="Pearson D."/>
            <person name="Quail M.A."/>
            <person name="Rabbinowitsch E."/>
            <person name="Rutherford K.M."/>
            <person name="Rutter S."/>
            <person name="Saunders D."/>
            <person name="Seeger K."/>
            <person name="Sharp S."/>
            <person name="Skelton J."/>
            <person name="Simmonds M.N."/>
            <person name="Squares R."/>
            <person name="Squares S."/>
            <person name="Stevens K."/>
            <person name="Taylor K."/>
            <person name="Taylor R.G."/>
            <person name="Tivey A."/>
            <person name="Walsh S.V."/>
            <person name="Warren T."/>
            <person name="Whitehead S."/>
            <person name="Woodward J.R."/>
            <person name="Volckaert G."/>
            <person name="Aert R."/>
            <person name="Robben J."/>
            <person name="Grymonprez B."/>
            <person name="Weltjens I."/>
            <person name="Vanstreels E."/>
            <person name="Rieger M."/>
            <person name="Schaefer M."/>
            <person name="Mueller-Auer S."/>
            <person name="Gabel C."/>
            <person name="Fuchs M."/>
            <person name="Duesterhoeft A."/>
            <person name="Fritzc C."/>
            <person name="Holzer E."/>
            <person name="Moestl D."/>
            <person name="Hilbert H."/>
            <person name="Borzym K."/>
            <person name="Langer I."/>
            <person name="Beck A."/>
            <person name="Lehrach H."/>
            <person name="Reinhardt R."/>
            <person name="Pohl T.M."/>
            <person name="Eger P."/>
            <person name="Zimmermann W."/>
            <person name="Wedler H."/>
            <person name="Wambutt R."/>
            <person name="Purnelle B."/>
            <person name="Goffeau A."/>
            <person name="Cadieu E."/>
            <person name="Dreano S."/>
            <person name="Gloux S."/>
            <person name="Lelaure V."/>
            <person name="Mottier S."/>
            <person name="Galibert F."/>
            <person name="Aves S.J."/>
            <person name="Xiang Z."/>
            <person name="Hunt C."/>
            <person name="Moore K."/>
            <person name="Hurst S.M."/>
            <person name="Lucas M."/>
            <person name="Rochet M."/>
            <person name="Gaillardin C."/>
            <person name="Tallada V.A."/>
            <person name="Garzon A."/>
            <person name="Thode G."/>
            <person name="Daga R.R."/>
            <person name="Cruzado L."/>
            <person name="Jimenez J."/>
            <person name="Sanchez M."/>
            <person name="del Rey F."/>
            <person name="Benito J."/>
            <person name="Dominguez A."/>
            <person name="Revuelta J.L."/>
            <person name="Moreno S."/>
            <person name="Armstrong J."/>
            <person name="Forsburg S.L."/>
            <person name="Cerutti L."/>
            <person name="Lowe T."/>
            <person name="McCombie W.R."/>
            <person name="Paulsen I."/>
            <person name="Potashkin J."/>
            <person name="Shpakovski G.V."/>
            <person name="Ussery D."/>
            <person name="Barrell B.G."/>
            <person name="Nurse P."/>
        </authorList>
    </citation>
    <scope>NUCLEOTIDE SEQUENCE [LARGE SCALE GENOMIC DNA]</scope>
    <source>
        <strain>972 / ATCC 24843</strain>
    </source>
</reference>
<proteinExistence type="predicted"/>
<protein>
    <recommendedName>
        <fullName>Uncharacterized protein PB16A4.06c</fullName>
    </recommendedName>
</protein>
<keyword id="KW-1185">Reference proteome</keyword>
<organism>
    <name type="scientific">Schizosaccharomyces pombe (strain 972 / ATCC 24843)</name>
    <name type="common">Fission yeast</name>
    <dbReference type="NCBI Taxonomy" id="284812"/>
    <lineage>
        <taxon>Eukaryota</taxon>
        <taxon>Fungi</taxon>
        <taxon>Dikarya</taxon>
        <taxon>Ascomycota</taxon>
        <taxon>Taphrinomycotina</taxon>
        <taxon>Schizosaccharomycetes</taxon>
        <taxon>Schizosaccharomycetales</taxon>
        <taxon>Schizosaccharomycetaceae</taxon>
        <taxon>Schizosaccharomyces</taxon>
    </lineage>
</organism>
<dbReference type="EMBL" id="CU329672">
    <property type="protein sequence ID" value="CAC39325.1"/>
    <property type="molecule type" value="Genomic_DNA"/>
</dbReference>
<dbReference type="RefSeq" id="NP_588030.1">
    <property type="nucleotide sequence ID" value="NM_001023021.2"/>
</dbReference>
<dbReference type="SMR" id="Q96WU9"/>
<dbReference type="BioGRID" id="276055">
    <property type="interactions" value="10"/>
</dbReference>
<dbReference type="iPTMnet" id="Q96WU9"/>
<dbReference type="PaxDb" id="4896-SPCPB16A4.06c.1"/>
<dbReference type="EnsemblFungi" id="SPCPB16A4.06c.1">
    <property type="protein sequence ID" value="SPCPB16A4.06c.1:pep"/>
    <property type="gene ID" value="SPCPB16A4.06c"/>
</dbReference>
<dbReference type="PomBase" id="SPCPB16A4.06c"/>
<dbReference type="VEuPathDB" id="FungiDB:SPCPB16A4.06c"/>
<dbReference type="HOGENOM" id="CLU_1982864_0_0_1"/>
<dbReference type="InParanoid" id="Q96WU9"/>
<dbReference type="OMA" id="EAWRKYF"/>
<dbReference type="PRO" id="PR:Q96WU9"/>
<dbReference type="Proteomes" id="UP000002485">
    <property type="component" value="Chromosome III"/>
</dbReference>
<dbReference type="GO" id="GO:0005829">
    <property type="term" value="C:cytosol"/>
    <property type="evidence" value="ECO:0007005"/>
    <property type="project" value="PomBase"/>
</dbReference>
<dbReference type="GO" id="GO:0005634">
    <property type="term" value="C:nucleus"/>
    <property type="evidence" value="ECO:0007005"/>
    <property type="project" value="PomBase"/>
</dbReference>
<sequence length="126" mass="14423">MQASSEPANVHFEGQNQSSEGQLSTSPPRRWRNCTLQRHGSRASADEFCEQYRSRSHGPQGRRSLEHDNQFFNSRTYYGNGGNTTDTEALQKSVGSQSADEFETLREQTVPNPIAEAWRKYFRKVH</sequence>
<feature type="chain" id="PRO_0000116818" description="Uncharacterized protein PB16A4.06c">
    <location>
        <begin position="1"/>
        <end position="126"/>
    </location>
</feature>
<feature type="region of interest" description="Disordered" evidence="1">
    <location>
        <begin position="1"/>
        <end position="101"/>
    </location>
</feature>
<feature type="compositionally biased region" description="Polar residues" evidence="1">
    <location>
        <begin position="14"/>
        <end position="27"/>
    </location>
</feature>
<feature type="compositionally biased region" description="Polar residues" evidence="1">
    <location>
        <begin position="86"/>
        <end position="99"/>
    </location>
</feature>